<name>NFUA_ACTSZ</name>
<feature type="chain" id="PRO_1000073655" description="Fe/S biogenesis protein NfuA">
    <location>
        <begin position="1"/>
        <end position="194"/>
    </location>
</feature>
<feature type="binding site" evidence="1">
    <location>
        <position position="151"/>
    </location>
    <ligand>
        <name>[4Fe-4S] cluster</name>
        <dbReference type="ChEBI" id="CHEBI:49883"/>
    </ligand>
</feature>
<feature type="binding site" evidence="1">
    <location>
        <position position="154"/>
    </location>
    <ligand>
        <name>[4Fe-4S] cluster</name>
        <dbReference type="ChEBI" id="CHEBI:49883"/>
    </ligand>
</feature>
<accession>A6VL27</accession>
<organism>
    <name type="scientific">Actinobacillus succinogenes (strain ATCC 55618 / DSM 22257 / CCUG 43843 / 130Z)</name>
    <dbReference type="NCBI Taxonomy" id="339671"/>
    <lineage>
        <taxon>Bacteria</taxon>
        <taxon>Pseudomonadati</taxon>
        <taxon>Pseudomonadota</taxon>
        <taxon>Gammaproteobacteria</taxon>
        <taxon>Pasteurellales</taxon>
        <taxon>Pasteurellaceae</taxon>
        <taxon>Actinobacillus</taxon>
    </lineage>
</organism>
<gene>
    <name evidence="1" type="primary">nfuA</name>
    <name type="ordered locus">Asuc_0296</name>
</gene>
<keyword id="KW-0004">4Fe-4S</keyword>
<keyword id="KW-0408">Iron</keyword>
<keyword id="KW-0411">Iron-sulfur</keyword>
<keyword id="KW-0479">Metal-binding</keyword>
<keyword id="KW-1185">Reference proteome</keyword>
<proteinExistence type="inferred from homology"/>
<comment type="function">
    <text evidence="1">Involved in iron-sulfur cluster biogenesis. Binds a 4Fe-4S cluster, can transfer this cluster to apoproteins, and thereby intervenes in the maturation of Fe/S proteins. Could also act as a scaffold/chaperone for damaged Fe/S proteins.</text>
</comment>
<comment type="cofactor">
    <cofactor evidence="1">
        <name>[4Fe-4S] cluster</name>
        <dbReference type="ChEBI" id="CHEBI:49883"/>
    </cofactor>
    <text evidence="1">Binds 1 [4Fe-4S] cluster per subunit. The cluster is presumably bound at the interface of two monomers.</text>
</comment>
<comment type="subunit">
    <text evidence="1">Homodimer.</text>
</comment>
<comment type="similarity">
    <text evidence="1">Belongs to the NfuA family.</text>
</comment>
<protein>
    <recommendedName>
        <fullName evidence="1">Fe/S biogenesis protein NfuA</fullName>
    </recommendedName>
</protein>
<dbReference type="EMBL" id="CP000746">
    <property type="protein sequence ID" value="ABR73674.1"/>
    <property type="molecule type" value="Genomic_DNA"/>
</dbReference>
<dbReference type="RefSeq" id="WP_011978949.1">
    <property type="nucleotide sequence ID" value="NC_009655.1"/>
</dbReference>
<dbReference type="SMR" id="A6VL27"/>
<dbReference type="STRING" id="339671.Asuc_0296"/>
<dbReference type="KEGG" id="asu:Asuc_0296"/>
<dbReference type="eggNOG" id="COG0316">
    <property type="taxonomic scope" value="Bacteria"/>
</dbReference>
<dbReference type="eggNOG" id="COG0694">
    <property type="taxonomic scope" value="Bacteria"/>
</dbReference>
<dbReference type="HOGENOM" id="CLU_094569_0_0_6"/>
<dbReference type="OrthoDB" id="9785450at2"/>
<dbReference type="Proteomes" id="UP000001114">
    <property type="component" value="Chromosome"/>
</dbReference>
<dbReference type="GO" id="GO:0051539">
    <property type="term" value="F:4 iron, 4 sulfur cluster binding"/>
    <property type="evidence" value="ECO:0007669"/>
    <property type="project" value="UniProtKB-UniRule"/>
</dbReference>
<dbReference type="GO" id="GO:0005506">
    <property type="term" value="F:iron ion binding"/>
    <property type="evidence" value="ECO:0007669"/>
    <property type="project" value="InterPro"/>
</dbReference>
<dbReference type="GO" id="GO:0016226">
    <property type="term" value="P:iron-sulfur cluster assembly"/>
    <property type="evidence" value="ECO:0007669"/>
    <property type="project" value="UniProtKB-UniRule"/>
</dbReference>
<dbReference type="GO" id="GO:0051604">
    <property type="term" value="P:protein maturation"/>
    <property type="evidence" value="ECO:0007669"/>
    <property type="project" value="UniProtKB-UniRule"/>
</dbReference>
<dbReference type="Gene3D" id="3.30.300.130">
    <property type="entry name" value="Fe-S cluster assembly (FSCA)"/>
    <property type="match status" value="1"/>
</dbReference>
<dbReference type="Gene3D" id="2.60.300.12">
    <property type="entry name" value="HesB-like domain"/>
    <property type="match status" value="1"/>
</dbReference>
<dbReference type="HAMAP" id="MF_01637">
    <property type="entry name" value="Fe_S_biogen_NfuA"/>
    <property type="match status" value="1"/>
</dbReference>
<dbReference type="InterPro" id="IPR017726">
    <property type="entry name" value="Fe/S_biogenesis_protein_NfuA"/>
</dbReference>
<dbReference type="InterPro" id="IPR000361">
    <property type="entry name" value="FeS_biogenesis"/>
</dbReference>
<dbReference type="InterPro" id="IPR034904">
    <property type="entry name" value="FSCA_dom_sf"/>
</dbReference>
<dbReference type="InterPro" id="IPR035903">
    <property type="entry name" value="HesB-like_dom_sf"/>
</dbReference>
<dbReference type="InterPro" id="IPR001075">
    <property type="entry name" value="NIF_FeS_clus_asmbl_NifU_C"/>
</dbReference>
<dbReference type="NCBIfam" id="NF008392">
    <property type="entry name" value="PRK11190.1"/>
    <property type="match status" value="1"/>
</dbReference>
<dbReference type="NCBIfam" id="TIGR03341">
    <property type="entry name" value="YhgI_GntY"/>
    <property type="match status" value="1"/>
</dbReference>
<dbReference type="PANTHER" id="PTHR11178:SF51">
    <property type="entry name" value="FE_S BIOGENESIS PROTEIN NFUA"/>
    <property type="match status" value="1"/>
</dbReference>
<dbReference type="PANTHER" id="PTHR11178">
    <property type="entry name" value="IRON-SULFUR CLUSTER SCAFFOLD PROTEIN NFU-RELATED"/>
    <property type="match status" value="1"/>
</dbReference>
<dbReference type="Pfam" id="PF01521">
    <property type="entry name" value="Fe-S_biosyn"/>
    <property type="match status" value="1"/>
</dbReference>
<dbReference type="Pfam" id="PF01106">
    <property type="entry name" value="NifU"/>
    <property type="match status" value="1"/>
</dbReference>
<dbReference type="SUPFAM" id="SSF117916">
    <property type="entry name" value="Fe-S cluster assembly (FSCA) domain-like"/>
    <property type="match status" value="1"/>
</dbReference>
<dbReference type="SUPFAM" id="SSF89360">
    <property type="entry name" value="HesB-like domain"/>
    <property type="match status" value="1"/>
</dbReference>
<evidence type="ECO:0000255" key="1">
    <source>
        <dbReference type="HAMAP-Rule" id="MF_01637"/>
    </source>
</evidence>
<reference key="1">
    <citation type="journal article" date="2010" name="BMC Genomics">
        <title>A genomic perspective on the potential of Actinobacillus succinogenes for industrial succinate production.</title>
        <authorList>
            <person name="McKinlay J.B."/>
            <person name="Laivenieks M."/>
            <person name="Schindler B.D."/>
            <person name="McKinlay A.A."/>
            <person name="Siddaramappa S."/>
            <person name="Challacombe J.F."/>
            <person name="Lowry S.R."/>
            <person name="Clum A."/>
            <person name="Lapidus A.L."/>
            <person name="Burkhart K.B."/>
            <person name="Harkins V."/>
            <person name="Vieille C."/>
        </authorList>
    </citation>
    <scope>NUCLEOTIDE SEQUENCE [LARGE SCALE GENOMIC DNA]</scope>
    <source>
        <strain>ATCC 55618 / DSM 22257 / CCUG 43843 / 130Z</strain>
    </source>
</reference>
<sequence>MEHIKISDAAQAHFRKLLESQEEGTNIRIFVVNPGTPNAECGVSYCPPSNVEENDSELKFNGFSAFIDDISYPFLEDAEIDYVTEELGTQLTLKAPNAKMRKVADDAPLIERVDYVIQTQINPQLASHGGRITLIEITDDGYAVLQFGGGCNGCSMVDVTLKDGVEKQLVEMFNGELKGAKDITEHQRGEHSYY</sequence>